<feature type="chain" id="PRO_0000170352" description="C4-dicarboxylate transporter DcuA">
    <location>
        <begin position="1"/>
        <end position="132" status="greater than"/>
    </location>
</feature>
<feature type="transmembrane region" description="Helical" evidence="2">
    <location>
        <begin position="20"/>
        <end position="40"/>
    </location>
</feature>
<feature type="transmembrane region" description="Helical" evidence="2">
    <location>
        <begin position="49"/>
        <end position="69"/>
    </location>
</feature>
<feature type="transmembrane region" description="Helical" evidence="2">
    <location>
        <begin position="87"/>
        <end position="107"/>
    </location>
</feature>
<feature type="non-terminal residue">
    <location>
        <position position="132"/>
    </location>
</feature>
<evidence type="ECO:0000250" key="1">
    <source>
        <dbReference type="UniProtKB" id="P0ABN5"/>
    </source>
</evidence>
<evidence type="ECO:0000255" key="2"/>
<evidence type="ECO:0000305" key="3"/>
<dbReference type="EMBL" id="D13252">
    <property type="protein sequence ID" value="BAA20989.1"/>
    <property type="molecule type" value="Genomic_DNA"/>
</dbReference>
<dbReference type="PIR" id="PS0397">
    <property type="entry name" value="PS0397"/>
</dbReference>
<dbReference type="STRING" id="273526.SMDB11_4453"/>
<dbReference type="GO" id="GO:0005886">
    <property type="term" value="C:plasma membrane"/>
    <property type="evidence" value="ECO:0007669"/>
    <property type="project" value="UniProtKB-SubCell"/>
</dbReference>
<dbReference type="GO" id="GO:0015297">
    <property type="term" value="F:antiporter activity"/>
    <property type="evidence" value="ECO:0007669"/>
    <property type="project" value="UniProtKB-KW"/>
</dbReference>
<dbReference type="GO" id="GO:0015556">
    <property type="term" value="F:C4-dicarboxylate transmembrane transporter activity"/>
    <property type="evidence" value="ECO:0007669"/>
    <property type="project" value="InterPro"/>
</dbReference>
<dbReference type="InterPro" id="IPR004668">
    <property type="entry name" value="Anaer_Dcu_memb_transpt"/>
</dbReference>
<dbReference type="PANTHER" id="PTHR36106">
    <property type="entry name" value="ANAEROBIC C4-DICARBOXYLATE TRANSPORTER DCUB"/>
    <property type="match status" value="1"/>
</dbReference>
<dbReference type="PANTHER" id="PTHR36106:SF2">
    <property type="entry name" value="C4-DICARBOXYLATE TRANSPORTER DCUA"/>
    <property type="match status" value="1"/>
</dbReference>
<dbReference type="Pfam" id="PF03605">
    <property type="entry name" value="DcuA_DcuB"/>
    <property type="match status" value="1"/>
</dbReference>
<gene>
    <name type="primary">dcuA</name>
</gene>
<reference key="1">
    <citation type="journal article" date="1994" name="Plasmid">
        <title>Construction of a versatile promoter analysis vector and its use for analysis of the Serratia marcescens aspartase promoter region.</title>
        <authorList>
            <person name="Omori K."/>
            <person name="Akatsuka H."/>
            <person name="Komatsubara S."/>
        </authorList>
    </citation>
    <scope>NUCLEOTIDE SEQUENCE [GENOMIC DNA]</scope>
    <source>
        <strain>Sr41</strain>
    </source>
</reference>
<accession>P40684</accession>
<comment type="function">
    <text evidence="1">Responsible for the transport of C4-dicarboxylates during aerobic and anaerobic growth. Required for the uptake of L-aspartate as a nitrogen source during aerobic growth. The uptake of L-aspartate in aerobic conditions is coupled to the excretion of fumarate, resulting in the net uptake of nitrogen without carbon uptake. In addition, during anaerobic growth, catalyzes the uptake of fumarate, malate or aspartate coupled to the export of succinate. May play a a general role in anaerobic C4-dicarboxylate transport.</text>
</comment>
<comment type="catalytic activity">
    <reaction evidence="1">
        <text>fumarate(in) + L-aspartate(out) = fumarate(out) + L-aspartate(in)</text>
        <dbReference type="Rhea" id="RHEA:72459"/>
        <dbReference type="ChEBI" id="CHEBI:29806"/>
        <dbReference type="ChEBI" id="CHEBI:29991"/>
    </reaction>
    <physiologicalReaction direction="left-to-right" evidence="1">
        <dbReference type="Rhea" id="RHEA:72460"/>
    </physiologicalReaction>
</comment>
<comment type="catalytic activity">
    <reaction evidence="1">
        <text>fumarate(in) + succinate(out) = fumarate(out) + succinate(in)</text>
        <dbReference type="Rhea" id="RHEA:29323"/>
        <dbReference type="ChEBI" id="CHEBI:29806"/>
        <dbReference type="ChEBI" id="CHEBI:30031"/>
    </reaction>
    <physiologicalReaction direction="right-to-left" evidence="1">
        <dbReference type="Rhea" id="RHEA:29325"/>
    </physiologicalReaction>
</comment>
<comment type="catalytic activity">
    <reaction evidence="1">
        <text>(S)-malate(in) + succinate(out) = (S)-malate(out) + succinate(in)</text>
        <dbReference type="Rhea" id="RHEA:29327"/>
        <dbReference type="ChEBI" id="CHEBI:15589"/>
        <dbReference type="ChEBI" id="CHEBI:30031"/>
    </reaction>
    <physiologicalReaction direction="right-to-left" evidence="1">
        <dbReference type="Rhea" id="RHEA:29329"/>
    </physiologicalReaction>
</comment>
<comment type="catalytic activity">
    <reaction evidence="1">
        <text>L-aspartate(in) + succinate(out) = L-aspartate(out) + succinate(in)</text>
        <dbReference type="Rhea" id="RHEA:29343"/>
        <dbReference type="ChEBI" id="CHEBI:29991"/>
        <dbReference type="ChEBI" id="CHEBI:30031"/>
    </reaction>
    <physiologicalReaction direction="right-to-left" evidence="1">
        <dbReference type="Rhea" id="RHEA:29345"/>
    </physiologicalReaction>
</comment>
<comment type="subcellular location">
    <subcellularLocation>
        <location evidence="1">Cell inner membrane</location>
        <topology evidence="2">Multi-pass membrane protein</topology>
    </subcellularLocation>
</comment>
<comment type="similarity">
    <text evidence="3">Belongs to the DcuA/DcuB transporter (TC 2.A.13.1) family.</text>
</comment>
<keyword id="KW-0050">Antiport</keyword>
<keyword id="KW-0997">Cell inner membrane</keyword>
<keyword id="KW-1003">Cell membrane</keyword>
<keyword id="KW-0472">Membrane</keyword>
<keyword id="KW-0812">Transmembrane</keyword>
<keyword id="KW-1133">Transmembrane helix</keyword>
<keyword id="KW-0813">Transport</keyword>
<name>DCUA_SERMA</name>
<proteinExistence type="inferred from homology"/>
<organism>
    <name type="scientific">Serratia marcescens</name>
    <dbReference type="NCBI Taxonomy" id="615"/>
    <lineage>
        <taxon>Bacteria</taxon>
        <taxon>Pseudomonadati</taxon>
        <taxon>Pseudomonadota</taxon>
        <taxon>Gammaproteobacteria</taxon>
        <taxon>Enterobacterales</taxon>
        <taxon>Yersiniaceae</taxon>
        <taxon>Serratia</taxon>
    </lineage>
</organism>
<protein>
    <recommendedName>
        <fullName evidence="1">C4-dicarboxylate transporter DcuA</fullName>
    </recommendedName>
</protein>
<sequence>MLAVELVIVLLAIFLGARLGGIGIGFAGGLGVLALALIGVKPGNIPFDVISIIMAVIAAISAMQVAGGMDYLVQQTEKLLRKNPKHITILAPIVTYFLTIFAGTGNISLSALPVIAEVAKEQGIKPCRPLST</sequence>